<feature type="chain" id="PRO_0000176496" description="Asparagine--tRNA ligase, cytoplasmic">
    <location>
        <begin position="1"/>
        <end position="548"/>
    </location>
</feature>
<feature type="region of interest" description="Disordered" evidence="2">
    <location>
        <begin position="1"/>
        <end position="25"/>
    </location>
</feature>
<feature type="region of interest" description="Disordered" evidence="2">
    <location>
        <begin position="69"/>
        <end position="91"/>
    </location>
</feature>
<feature type="compositionally biased region" description="Basic and acidic residues" evidence="2">
    <location>
        <begin position="8"/>
        <end position="25"/>
    </location>
</feature>
<feature type="compositionally biased region" description="Basic and acidic residues" evidence="2">
    <location>
        <begin position="71"/>
        <end position="91"/>
    </location>
</feature>
<feature type="modified residue" description="Phosphoserine" evidence="17 18">
    <location>
        <position position="61"/>
    </location>
</feature>
<feature type="modified residue" description="N6-acetyllysine" evidence="16">
    <location>
        <position position="244"/>
    </location>
</feature>
<feature type="modified residue" description="Phosphoserine" evidence="1">
    <location>
        <position position="482"/>
    </location>
</feature>
<feature type="modified residue" description="N6-acetyllysine" evidence="1">
    <location>
        <position position="490"/>
    </location>
</feature>
<feature type="splice variant" id="VSP_056201" description="In isoform 2." evidence="9">
    <original>GKNLMFLVLRDGTGYLQCVLADELCQCYNGVLL</original>
    <variation>VSVLQWSSLVHGEQCCSVWNAKSYPKGQAGSRW</variation>
    <location>
        <begin position="141"/>
        <end position="173"/>
    </location>
</feature>
<feature type="splice variant" id="VSP_056202" description="In isoform 2." evidence="9">
    <location>
        <begin position="174"/>
        <end position="547"/>
    </location>
</feature>
<feature type="sequence variant" id="VAR_085100" description="In NEDMILG; uncertain significance; decreased protein levels in patient cells; dbSNP:rs771435243." evidence="5">
    <original>R</original>
    <variation>P</variation>
    <location>
        <position position="11"/>
    </location>
</feature>
<feature type="sequence variant" id="VAR_085101" description="In NEDMILG; decreased protein levels in patient cells; decreased asparagine-tRNA ligase activity in patient cells; dbSNP:rs148893823." evidence="5 6">
    <original>T</original>
    <variation>M</variation>
    <location>
        <position position="17"/>
    </location>
</feature>
<feature type="sequence variant" id="VAR_085102" description="In NEDMILG; uncertain significance; dbSNP:rs2122452114." evidence="5">
    <original>K</original>
    <variation>E</variation>
    <location>
        <position position="60"/>
    </location>
</feature>
<feature type="sequence variant" id="VAR_085103" description="In NEDMILG." evidence="5">
    <location>
        <begin position="90"/>
        <end position="548"/>
    </location>
</feature>
<feature type="sequence variant" id="VAR_085104" description="In NEDMILG; uncertain significance; dbSNP:rs1402942713." evidence="5">
    <original>G</original>
    <variation>C</variation>
    <location>
        <position position="132"/>
    </location>
</feature>
<feature type="sequence variant" id="VAR_085105" description="In NEDMILEG; unable to rescue growth defects in a yeast complementation assay; dbSNP:rs2122429938." evidence="5">
    <original>R</original>
    <variation>L</variation>
    <location>
        <position position="322"/>
    </location>
</feature>
<feature type="sequence variant" id="VAR_085106" description="In NEDMILG; uncertain significance; dbSNP:rs2122428612." evidence="5">
    <original>L</original>
    <variation>P</variation>
    <location>
        <position position="350"/>
    </location>
</feature>
<feature type="sequence variant" id="VAR_085107" description="In NEDMILG; dbSNP:rs138016359." evidence="5 6">
    <original>D</original>
    <variation>A</variation>
    <location>
        <position position="356"/>
    </location>
</feature>
<feature type="sequence variant" id="VAR_085108" description="In NEDMILG; uncertain significance; dbSNP:rs769070609." evidence="5">
    <original>A</original>
    <variation>T</variation>
    <location>
        <position position="422"/>
    </location>
</feature>
<feature type="sequence variant" id="VAR_085109" description="In NEDMILG; uncertain significance; dbSNP:rs774597440." evidence="5">
    <original>T</original>
    <variation>I</variation>
    <location>
        <position position="459"/>
    </location>
</feature>
<feature type="sequence variant" id="VAR_085110" description="In NEDMILEG; uncertain significance; dbSNP:rs2122416610." evidence="5">
    <original>G</original>
    <variation>S</variation>
    <location>
        <position position="509"/>
    </location>
</feature>
<feature type="sequence variant" id="VAR_085111" description="In NEDMILEG; decreased asparagine-tRNA ligase activity in patient cells." evidence="5">
    <location>
        <begin position="534"/>
        <end position="548"/>
    </location>
</feature>
<feature type="sequence variant" id="VAR_085112" description="In NEDMILG; dbSNP:rs770931044." evidence="5 6">
    <original>R</original>
    <variation>C</variation>
    <location>
        <position position="545"/>
    </location>
</feature>
<feature type="sequence conflict" description="In Ref. 4; BAD96555." evidence="11" ref="4">
    <original>M</original>
    <variation>V</variation>
    <location>
        <position position="391"/>
    </location>
</feature>
<feature type="strand" evidence="19">
    <location>
        <begin position="5"/>
        <end position="8"/>
    </location>
</feature>
<feature type="turn" evidence="19">
    <location>
        <begin position="10"/>
        <end position="12"/>
    </location>
</feature>
<feature type="turn" evidence="19">
    <location>
        <begin position="15"/>
        <end position="17"/>
    </location>
</feature>
<feature type="strand" evidence="19">
    <location>
        <begin position="20"/>
        <end position="24"/>
    </location>
</feature>
<feature type="helix" evidence="19">
    <location>
        <begin position="29"/>
        <end position="34"/>
    </location>
</feature>
<feature type="strand" evidence="19">
    <location>
        <begin position="38"/>
        <end position="40"/>
    </location>
</feature>
<feature type="strand" evidence="19">
    <location>
        <begin position="43"/>
        <end position="47"/>
    </location>
</feature>
<feature type="strand" evidence="19">
    <location>
        <begin position="55"/>
        <end position="57"/>
    </location>
</feature>
<feature type="helix" evidence="19">
    <location>
        <begin position="60"/>
        <end position="73"/>
    </location>
</feature>
<feature type="helix" evidence="21">
    <location>
        <begin position="117"/>
        <end position="123"/>
    </location>
</feature>
<feature type="strand" evidence="21">
    <location>
        <begin position="126"/>
        <end position="140"/>
    </location>
</feature>
<feature type="turn" evidence="21">
    <location>
        <begin position="141"/>
        <end position="143"/>
    </location>
</feature>
<feature type="strand" evidence="21">
    <location>
        <begin position="144"/>
        <end position="150"/>
    </location>
</feature>
<feature type="strand" evidence="21">
    <location>
        <begin position="155"/>
        <end position="161"/>
    </location>
</feature>
<feature type="helix" evidence="21">
    <location>
        <begin position="163"/>
        <end position="166"/>
    </location>
</feature>
<feature type="helix" evidence="21">
    <location>
        <begin position="168"/>
        <end position="172"/>
    </location>
</feature>
<feature type="strand" evidence="21">
    <location>
        <begin position="178"/>
        <end position="187"/>
    </location>
</feature>
<feature type="helix" evidence="21">
    <location>
        <begin position="190"/>
        <end position="192"/>
    </location>
</feature>
<feature type="helix" evidence="21">
    <location>
        <begin position="195"/>
        <end position="197"/>
    </location>
</feature>
<feature type="strand" evidence="21">
    <location>
        <begin position="198"/>
        <end position="209"/>
    </location>
</feature>
<feature type="strand" evidence="22">
    <location>
        <begin position="222"/>
        <end position="224"/>
    </location>
</feature>
<feature type="helix" evidence="21">
    <location>
        <begin position="226"/>
        <end position="231"/>
    </location>
</feature>
<feature type="helix" evidence="21">
    <location>
        <begin position="233"/>
        <end position="236"/>
    </location>
</feature>
<feature type="helix" evidence="21">
    <location>
        <begin position="240"/>
        <end position="262"/>
    </location>
</feature>
<feature type="strand" evidence="21">
    <location>
        <begin position="272"/>
        <end position="275"/>
    </location>
</feature>
<feature type="strand" evidence="21">
    <location>
        <begin position="286"/>
        <end position="289"/>
    </location>
</feature>
<feature type="strand" evidence="21">
    <location>
        <begin position="292"/>
        <end position="296"/>
    </location>
</feature>
<feature type="helix" evidence="21">
    <location>
        <begin position="301"/>
        <end position="311"/>
    </location>
</feature>
<feature type="strand" evidence="21">
    <location>
        <begin position="312"/>
        <end position="321"/>
    </location>
</feature>
<feature type="strand" evidence="21">
    <location>
        <begin position="333"/>
        <end position="344"/>
    </location>
</feature>
<feature type="helix" evidence="21">
    <location>
        <begin position="347"/>
        <end position="367"/>
    </location>
</feature>
<feature type="helix" evidence="21">
    <location>
        <begin position="371"/>
        <end position="377"/>
    </location>
</feature>
<feature type="strand" evidence="21">
    <location>
        <begin position="389"/>
        <end position="392"/>
    </location>
</feature>
<feature type="helix" evidence="21">
    <location>
        <begin position="393"/>
        <end position="402"/>
    </location>
</feature>
<feature type="strand" evidence="20">
    <location>
        <begin position="408"/>
        <end position="410"/>
    </location>
</feature>
<feature type="helix" evidence="21">
    <location>
        <begin position="421"/>
        <end position="431"/>
    </location>
</feature>
<feature type="strand" evidence="21">
    <location>
        <begin position="435"/>
        <end position="438"/>
    </location>
</feature>
<feature type="helix" evidence="21">
    <location>
        <begin position="442"/>
        <end position="444"/>
    </location>
</feature>
<feature type="strand" evidence="21">
    <location>
        <begin position="455"/>
        <end position="466"/>
    </location>
</feature>
<feature type="turn" evidence="21">
    <location>
        <begin position="467"/>
        <end position="469"/>
    </location>
</feature>
<feature type="strand" evidence="21">
    <location>
        <begin position="470"/>
        <end position="478"/>
    </location>
</feature>
<feature type="helix" evidence="21">
    <location>
        <begin position="482"/>
        <end position="491"/>
    </location>
</feature>
<feature type="helix" evidence="21">
    <location>
        <begin position="497"/>
        <end position="499"/>
    </location>
</feature>
<feature type="helix" evidence="21">
    <location>
        <begin position="500"/>
        <end position="503"/>
    </location>
</feature>
<feature type="helix" evidence="21">
    <location>
        <begin position="504"/>
        <end position="506"/>
    </location>
</feature>
<feature type="strand" evidence="21">
    <location>
        <begin position="513"/>
        <end position="519"/>
    </location>
</feature>
<feature type="helix" evidence="21">
    <location>
        <begin position="520"/>
        <end position="527"/>
    </location>
</feature>
<feature type="helix" evidence="21">
    <location>
        <begin position="533"/>
        <end position="536"/>
    </location>
</feature>
<feature type="strand" evidence="21">
    <location>
        <begin position="537"/>
        <end position="539"/>
    </location>
</feature>
<proteinExistence type="evidence at protein level"/>
<organism>
    <name type="scientific">Homo sapiens</name>
    <name type="common">Human</name>
    <dbReference type="NCBI Taxonomy" id="9606"/>
    <lineage>
        <taxon>Eukaryota</taxon>
        <taxon>Metazoa</taxon>
        <taxon>Chordata</taxon>
        <taxon>Craniata</taxon>
        <taxon>Vertebrata</taxon>
        <taxon>Euteleostomi</taxon>
        <taxon>Mammalia</taxon>
        <taxon>Eutheria</taxon>
        <taxon>Euarchontoglires</taxon>
        <taxon>Primates</taxon>
        <taxon>Haplorrhini</taxon>
        <taxon>Catarrhini</taxon>
        <taxon>Hominidae</taxon>
        <taxon>Homo</taxon>
    </lineage>
</organism>
<evidence type="ECO:0000250" key="1">
    <source>
        <dbReference type="UniProtKB" id="Q8BP47"/>
    </source>
</evidence>
<evidence type="ECO:0000256" key="2">
    <source>
        <dbReference type="SAM" id="MobiDB-lite"/>
    </source>
</evidence>
<evidence type="ECO:0000269" key="3">
    <source>
    </source>
</evidence>
<evidence type="ECO:0000269" key="4">
    <source>
    </source>
</evidence>
<evidence type="ECO:0000269" key="5">
    <source>
    </source>
</evidence>
<evidence type="ECO:0000269" key="6">
    <source>
    </source>
</evidence>
<evidence type="ECO:0000269" key="7">
    <source>
    </source>
</evidence>
<evidence type="ECO:0000269" key="8">
    <source>
    </source>
</evidence>
<evidence type="ECO:0000303" key="9">
    <source>
    </source>
</evidence>
<evidence type="ECO:0000303" key="10">
    <source>
    </source>
</evidence>
<evidence type="ECO:0000305" key="11"/>
<evidence type="ECO:0000305" key="12">
    <source>
    </source>
</evidence>
<evidence type="ECO:0000312" key="13">
    <source>
        <dbReference type="HGNC" id="HGNC:7643"/>
    </source>
</evidence>
<evidence type="ECO:0007744" key="14">
    <source>
        <dbReference type="PDB" id="4ZYA"/>
    </source>
</evidence>
<evidence type="ECO:0007744" key="15">
    <source>
        <dbReference type="PDB" id="5XIX"/>
    </source>
</evidence>
<evidence type="ECO:0007744" key="16">
    <source>
    </source>
</evidence>
<evidence type="ECO:0007744" key="17">
    <source>
    </source>
</evidence>
<evidence type="ECO:0007744" key="18">
    <source>
    </source>
</evidence>
<evidence type="ECO:0007829" key="19">
    <source>
        <dbReference type="PDB" id="4ZYA"/>
    </source>
</evidence>
<evidence type="ECO:0007829" key="20">
    <source>
        <dbReference type="PDB" id="5XIX"/>
    </source>
</evidence>
<evidence type="ECO:0007829" key="21">
    <source>
        <dbReference type="PDB" id="8TC7"/>
    </source>
</evidence>
<evidence type="ECO:0007829" key="22">
    <source>
        <dbReference type="PDB" id="8TC9"/>
    </source>
</evidence>
<name>SYNC_HUMAN</name>
<accession>O43776</accession>
<accession>B4DG16</accession>
<accession>Q53GU6</accession>
<sequence length="548" mass="62943">MVLAELYVSDREGSDATGDGTKEKPFKTGLKALMTVGKEPFPTIYVDSQKENERWNVISKSQLKNIKKMWHREQMKSESREKKEAEDSLRREKNLEEAKKITIKNDPSLPEPKCVKIGALEGYRGQRVKVFGWVHRLRRQGKNLMFLVLRDGTGYLQCVLADELCQCYNGVLLSTESSVAVYGMLNLTPKGKQAPGGHELSCDFWELIGLAPAGGADNLINEESDVDVQLNNRHMMIRGENMSKILKARSMVTRCFRDHFFDRGYYEVTPPTLVQTQVEGGATLFKLDYFGEEAFLTQSSQLYLETCLPALGDVFCIAQSYRAEQSRTRRHLAEYTHVEAECPFLTFDDLLNRLEDLVCDVVDRILKSPAGSIVHELNPNFQPPKRPFKRMNYSDAIVWLKEHDVKKEDGTFYEFGEDIPEAPERLMTDTINEPILLCRFPVEIKSFYMQRCPEDSRLTESVDVLMPNVGEIVGGSMRIFDSEEILAGYKREGIDPTPYYWYTDQRKYGTCPHGGYGLGLERFLTWILNRYHIRDVCLYPRFVQRCTP</sequence>
<protein>
    <recommendedName>
        <fullName evidence="11">Asparagine--tRNA ligase, cytoplasmic</fullName>
        <ecNumber evidence="5 6 7">6.1.1.22</ecNumber>
    </recommendedName>
    <alternativeName>
        <fullName evidence="13">Asparaginyl-tRNA synthetase</fullName>
        <shortName evidence="13">AsnRS</shortName>
    </alternativeName>
    <alternativeName>
        <fullName evidence="13">Asparaginyl-tRNA synthetase 1</fullName>
    </alternativeName>
</protein>
<keyword id="KW-0002">3D-structure</keyword>
<keyword id="KW-0007">Acetylation</keyword>
<keyword id="KW-0025">Alternative splicing</keyword>
<keyword id="KW-0030">Aminoacyl-tRNA synthetase</keyword>
<keyword id="KW-0067">ATP-binding</keyword>
<keyword id="KW-0963">Cytoplasm</keyword>
<keyword id="KW-0903">Direct protein sequencing</keyword>
<keyword id="KW-0225">Disease variant</keyword>
<keyword id="KW-0887">Epilepsy</keyword>
<keyword id="KW-0991">Intellectual disability</keyword>
<keyword id="KW-0436">Ligase</keyword>
<keyword id="KW-0523">Neurodegeneration</keyword>
<keyword id="KW-0547">Nucleotide-binding</keyword>
<keyword id="KW-0597">Phosphoprotein</keyword>
<keyword id="KW-0648">Protein biosynthesis</keyword>
<keyword id="KW-1267">Proteomics identification</keyword>
<keyword id="KW-1185">Reference proteome</keyword>
<reference key="1">
    <citation type="journal article" date="1998" name="Nucleic Acids Res.">
        <title>Human cytosolic asparaginyl-tRNA synthetase: cDNA sequence, functional expression in Escherichia coli and characterization as human autoantigen.</title>
        <authorList>
            <person name="Beaulande M."/>
            <person name="Tarbouriech N."/>
            <person name="Haertlein M."/>
        </authorList>
    </citation>
    <scope>NUCLEOTIDE SEQUENCE [MRNA] (ISOFORM 1)</scope>
    <scope>SUBCELLULAR LOCATION</scope>
    <scope>CATALYTIC ACTIVITY</scope>
    <scope>FUNCTION</scope>
    <source>
        <tissue>Liver</tissue>
    </source>
</reference>
<reference key="2">
    <citation type="journal article" date="1998" name="Nucleic Acids Res.">
        <title>Human asparaginyl-tRNA synthetase: molecular cloning and the inference of the evolutionary history of Asx-tRNA synthetase family.</title>
        <authorList>
            <person name="Shiba K."/>
            <person name="Motegi H."/>
            <person name="Yoshida M."/>
            <person name="Noda T."/>
        </authorList>
    </citation>
    <scope>NUCLEOTIDE SEQUENCE [MRNA] (ISOFORM 1)</scope>
</reference>
<reference key="3">
    <citation type="journal article" date="2004" name="Nat. Genet.">
        <title>Complete sequencing and characterization of 21,243 full-length human cDNAs.</title>
        <authorList>
            <person name="Ota T."/>
            <person name="Suzuki Y."/>
            <person name="Nishikawa T."/>
            <person name="Otsuki T."/>
            <person name="Sugiyama T."/>
            <person name="Irie R."/>
            <person name="Wakamatsu A."/>
            <person name="Hayashi K."/>
            <person name="Sato H."/>
            <person name="Nagai K."/>
            <person name="Kimura K."/>
            <person name="Makita H."/>
            <person name="Sekine M."/>
            <person name="Obayashi M."/>
            <person name="Nishi T."/>
            <person name="Shibahara T."/>
            <person name="Tanaka T."/>
            <person name="Ishii S."/>
            <person name="Yamamoto J."/>
            <person name="Saito K."/>
            <person name="Kawai Y."/>
            <person name="Isono Y."/>
            <person name="Nakamura Y."/>
            <person name="Nagahari K."/>
            <person name="Murakami K."/>
            <person name="Yasuda T."/>
            <person name="Iwayanagi T."/>
            <person name="Wagatsuma M."/>
            <person name="Shiratori A."/>
            <person name="Sudo H."/>
            <person name="Hosoiri T."/>
            <person name="Kaku Y."/>
            <person name="Kodaira H."/>
            <person name="Kondo H."/>
            <person name="Sugawara M."/>
            <person name="Takahashi M."/>
            <person name="Kanda K."/>
            <person name="Yokoi T."/>
            <person name="Furuya T."/>
            <person name="Kikkawa E."/>
            <person name="Omura Y."/>
            <person name="Abe K."/>
            <person name="Kamihara K."/>
            <person name="Katsuta N."/>
            <person name="Sato K."/>
            <person name="Tanikawa M."/>
            <person name="Yamazaki M."/>
            <person name="Ninomiya K."/>
            <person name="Ishibashi T."/>
            <person name="Yamashita H."/>
            <person name="Murakawa K."/>
            <person name="Fujimori K."/>
            <person name="Tanai H."/>
            <person name="Kimata M."/>
            <person name="Watanabe M."/>
            <person name="Hiraoka S."/>
            <person name="Chiba Y."/>
            <person name="Ishida S."/>
            <person name="Ono Y."/>
            <person name="Takiguchi S."/>
            <person name="Watanabe S."/>
            <person name="Yosida M."/>
            <person name="Hotuta T."/>
            <person name="Kusano J."/>
            <person name="Kanehori K."/>
            <person name="Takahashi-Fujii A."/>
            <person name="Hara H."/>
            <person name="Tanase T.-O."/>
            <person name="Nomura Y."/>
            <person name="Togiya S."/>
            <person name="Komai F."/>
            <person name="Hara R."/>
            <person name="Takeuchi K."/>
            <person name="Arita M."/>
            <person name="Imose N."/>
            <person name="Musashino K."/>
            <person name="Yuuki H."/>
            <person name="Oshima A."/>
            <person name="Sasaki N."/>
            <person name="Aotsuka S."/>
            <person name="Yoshikawa Y."/>
            <person name="Matsunawa H."/>
            <person name="Ichihara T."/>
            <person name="Shiohata N."/>
            <person name="Sano S."/>
            <person name="Moriya S."/>
            <person name="Momiyama H."/>
            <person name="Satoh N."/>
            <person name="Takami S."/>
            <person name="Terashima Y."/>
            <person name="Suzuki O."/>
            <person name="Nakagawa S."/>
            <person name="Senoh A."/>
            <person name="Mizoguchi H."/>
            <person name="Goto Y."/>
            <person name="Shimizu F."/>
            <person name="Wakebe H."/>
            <person name="Hishigaki H."/>
            <person name="Watanabe T."/>
            <person name="Sugiyama A."/>
            <person name="Takemoto M."/>
            <person name="Kawakami B."/>
            <person name="Yamazaki M."/>
            <person name="Watanabe K."/>
            <person name="Kumagai A."/>
            <person name="Itakura S."/>
            <person name="Fukuzumi Y."/>
            <person name="Fujimori Y."/>
            <person name="Komiyama M."/>
            <person name="Tashiro H."/>
            <person name="Tanigami A."/>
            <person name="Fujiwara T."/>
            <person name="Ono T."/>
            <person name="Yamada K."/>
            <person name="Fujii Y."/>
            <person name="Ozaki K."/>
            <person name="Hirao M."/>
            <person name="Ohmori Y."/>
            <person name="Kawabata A."/>
            <person name="Hikiji T."/>
            <person name="Kobatake N."/>
            <person name="Inagaki H."/>
            <person name="Ikema Y."/>
            <person name="Okamoto S."/>
            <person name="Okitani R."/>
            <person name="Kawakami T."/>
            <person name="Noguchi S."/>
            <person name="Itoh T."/>
            <person name="Shigeta K."/>
            <person name="Senba T."/>
            <person name="Matsumura K."/>
            <person name="Nakajima Y."/>
            <person name="Mizuno T."/>
            <person name="Morinaga M."/>
            <person name="Sasaki M."/>
            <person name="Togashi T."/>
            <person name="Oyama M."/>
            <person name="Hata H."/>
            <person name="Watanabe M."/>
            <person name="Komatsu T."/>
            <person name="Mizushima-Sugano J."/>
            <person name="Satoh T."/>
            <person name="Shirai Y."/>
            <person name="Takahashi Y."/>
            <person name="Nakagawa K."/>
            <person name="Okumura K."/>
            <person name="Nagase T."/>
            <person name="Nomura N."/>
            <person name="Kikuchi H."/>
            <person name="Masuho Y."/>
            <person name="Yamashita R."/>
            <person name="Nakai K."/>
            <person name="Yada T."/>
            <person name="Nakamura Y."/>
            <person name="Ohara O."/>
            <person name="Isogai T."/>
            <person name="Sugano S."/>
        </authorList>
    </citation>
    <scope>NUCLEOTIDE SEQUENCE [LARGE SCALE MRNA] (ISOFORM 2)</scope>
    <source>
        <tissue>Amygdala</tissue>
    </source>
</reference>
<reference key="4">
    <citation type="submission" date="2005-04" db="EMBL/GenBank/DDBJ databases">
        <authorList>
            <person name="Suzuki Y."/>
            <person name="Sugano S."/>
            <person name="Totoki Y."/>
            <person name="Toyoda A."/>
            <person name="Takeda T."/>
            <person name="Sakaki Y."/>
            <person name="Tanaka A."/>
            <person name="Yokoyama S."/>
        </authorList>
    </citation>
    <scope>NUCLEOTIDE SEQUENCE [LARGE SCALE MRNA] (ISOFORM 1)</scope>
    <source>
        <tissue>Liver</tissue>
    </source>
</reference>
<reference key="5">
    <citation type="journal article" date="2005" name="Nature">
        <title>DNA sequence and analysis of human chromosome 18.</title>
        <authorList>
            <person name="Nusbaum C."/>
            <person name="Zody M.C."/>
            <person name="Borowsky M.L."/>
            <person name="Kamal M."/>
            <person name="Kodira C.D."/>
            <person name="Taylor T.D."/>
            <person name="Whittaker C.A."/>
            <person name="Chang J.L."/>
            <person name="Cuomo C.A."/>
            <person name="Dewar K."/>
            <person name="FitzGerald M.G."/>
            <person name="Yang X."/>
            <person name="Abouelleil A."/>
            <person name="Allen N.R."/>
            <person name="Anderson S."/>
            <person name="Bloom T."/>
            <person name="Bugalter B."/>
            <person name="Butler J."/>
            <person name="Cook A."/>
            <person name="DeCaprio D."/>
            <person name="Engels R."/>
            <person name="Garber M."/>
            <person name="Gnirke A."/>
            <person name="Hafez N."/>
            <person name="Hall J.L."/>
            <person name="Norman C.H."/>
            <person name="Itoh T."/>
            <person name="Jaffe D.B."/>
            <person name="Kuroki Y."/>
            <person name="Lehoczky J."/>
            <person name="Lui A."/>
            <person name="Macdonald P."/>
            <person name="Mauceli E."/>
            <person name="Mikkelsen T.S."/>
            <person name="Naylor J.W."/>
            <person name="Nicol R."/>
            <person name="Nguyen C."/>
            <person name="Noguchi H."/>
            <person name="O'Leary S.B."/>
            <person name="Piqani B."/>
            <person name="Smith C.L."/>
            <person name="Talamas J.A."/>
            <person name="Topham K."/>
            <person name="Totoki Y."/>
            <person name="Toyoda A."/>
            <person name="Wain H.M."/>
            <person name="Young S.K."/>
            <person name="Zeng Q."/>
            <person name="Zimmer A.R."/>
            <person name="Fujiyama A."/>
            <person name="Hattori M."/>
            <person name="Birren B.W."/>
            <person name="Sakaki Y."/>
            <person name="Lander E.S."/>
        </authorList>
    </citation>
    <scope>NUCLEOTIDE SEQUENCE [LARGE SCALE GENOMIC DNA]</scope>
</reference>
<reference key="6">
    <citation type="journal article" date="2004" name="Genome Res.">
        <title>The status, quality, and expansion of the NIH full-length cDNA project: the Mammalian Gene Collection (MGC).</title>
        <authorList>
            <consortium name="The MGC Project Team"/>
        </authorList>
    </citation>
    <scope>NUCLEOTIDE SEQUENCE [LARGE SCALE MRNA] (ISOFORM 1)</scope>
    <source>
        <tissue>Colon</tissue>
    </source>
</reference>
<reference key="7">
    <citation type="journal article" date="1999" name="J. Immunol.">
        <title>Anti-KS: identification of autoantibodies to asparaginyl-transfer RNA synthetase associated with interstitial lung disease.</title>
        <authorList>
            <person name="Hirakata M."/>
            <person name="Suwa A."/>
            <person name="Nagai S."/>
            <person name="Kron M.A."/>
            <person name="Trieu E.P."/>
            <person name="Mimori T."/>
            <person name="Akizuki M."/>
            <person name="Targoff I.N."/>
        </authorList>
    </citation>
    <scope>AUTOANTIBODIES</scope>
</reference>
<reference key="8">
    <citation type="journal article" date="2002" name="J. Exp. Med.">
        <title>Histidyl-tRNA synthetase and asparaginyl-tRNA synthetase, autoantigens in myositis, activate chemokine receptors on T lymphocytes and immature dendritic cells.</title>
        <authorList>
            <person name="Howard O.M."/>
            <person name="Dong H.F."/>
            <person name="Yang D."/>
            <person name="Raben N."/>
            <person name="Nagaraju K."/>
            <person name="Rosen A."/>
            <person name="Casciola-Rosen L."/>
            <person name="Haertlein M."/>
            <person name="Kron M."/>
            <person name="Yang D."/>
            <person name="Yiadom K."/>
            <person name="Dwivedi S."/>
            <person name="Plotz P.H."/>
            <person name="Oppenheim J.J."/>
        </authorList>
    </citation>
    <scope>FUNCTION</scope>
</reference>
<reference key="9">
    <citation type="journal article" date="2009" name="Proc. Natl. Acad. Sci. U.S.A.">
        <title>Global profiling of protease cleavage sites by chemoselective labeling of protein N-termini.</title>
        <authorList>
            <person name="Xu G."/>
            <person name="Shin S.B."/>
            <person name="Jaffrey S.R."/>
        </authorList>
    </citation>
    <scope>PROTEIN SEQUENCE [LARGE SCALE ANALYSIS] OF 2-12</scope>
    <source>
        <tissue>Leukemic T-cell</tissue>
    </source>
</reference>
<reference key="10">
    <citation type="journal article" date="2008" name="Proc. Natl. Acad. Sci. U.S.A.">
        <title>A quantitative atlas of mitotic phosphorylation.</title>
        <authorList>
            <person name="Dephoure N."/>
            <person name="Zhou C."/>
            <person name="Villen J."/>
            <person name="Beausoleil S.A."/>
            <person name="Bakalarski C.E."/>
            <person name="Elledge S.J."/>
            <person name="Gygi S.P."/>
        </authorList>
    </citation>
    <scope>IDENTIFICATION BY MASS SPECTROMETRY [LARGE SCALE ANALYSIS]</scope>
    <source>
        <tissue>Cervix carcinoma</tissue>
    </source>
</reference>
<reference key="11">
    <citation type="journal article" date="2009" name="Science">
        <title>Lysine acetylation targets protein complexes and co-regulates major cellular functions.</title>
        <authorList>
            <person name="Choudhary C."/>
            <person name="Kumar C."/>
            <person name="Gnad F."/>
            <person name="Nielsen M.L."/>
            <person name="Rehman M."/>
            <person name="Walther T.C."/>
            <person name="Olsen J.V."/>
            <person name="Mann M."/>
        </authorList>
    </citation>
    <scope>ACETYLATION [LARGE SCALE ANALYSIS] AT LYS-244</scope>
    <scope>IDENTIFICATION BY MASS SPECTROMETRY [LARGE SCALE ANALYSIS]</scope>
</reference>
<reference key="12">
    <citation type="journal article" date="2010" name="Sci. Signal.">
        <title>Quantitative phosphoproteomics reveals widespread full phosphorylation site occupancy during mitosis.</title>
        <authorList>
            <person name="Olsen J.V."/>
            <person name="Vermeulen M."/>
            <person name="Santamaria A."/>
            <person name="Kumar C."/>
            <person name="Miller M.L."/>
            <person name="Jensen L.J."/>
            <person name="Gnad F."/>
            <person name="Cox J."/>
            <person name="Jensen T.S."/>
            <person name="Nigg E.A."/>
            <person name="Brunak S."/>
            <person name="Mann M."/>
        </authorList>
    </citation>
    <scope>PHOSPHORYLATION [LARGE SCALE ANALYSIS] AT SER-61</scope>
    <scope>IDENTIFICATION BY MASS SPECTROMETRY [LARGE SCALE ANALYSIS]</scope>
    <source>
        <tissue>Cervix carcinoma</tissue>
    </source>
</reference>
<reference key="13">
    <citation type="journal article" date="2011" name="BMC Syst. Biol.">
        <title>Initial characterization of the human central proteome.</title>
        <authorList>
            <person name="Burkard T.R."/>
            <person name="Planyavsky M."/>
            <person name="Kaupe I."/>
            <person name="Breitwieser F.P."/>
            <person name="Buerckstuemmer T."/>
            <person name="Bennett K.L."/>
            <person name="Superti-Furga G."/>
            <person name="Colinge J."/>
        </authorList>
    </citation>
    <scope>IDENTIFICATION BY MASS SPECTROMETRY [LARGE SCALE ANALYSIS]</scope>
</reference>
<reference key="14">
    <citation type="journal article" date="2012" name="Proc. Natl. Acad. Sci. U.S.A.">
        <title>N-terminal acetylome analyses and functional insights of the N-terminal acetyltransferase NatB.</title>
        <authorList>
            <person name="Van Damme P."/>
            <person name="Lasa M."/>
            <person name="Polevoda B."/>
            <person name="Gazquez C."/>
            <person name="Elosegui-Artola A."/>
            <person name="Kim D.S."/>
            <person name="De Juan-Pardo E."/>
            <person name="Demeyer K."/>
            <person name="Hole K."/>
            <person name="Larrea E."/>
            <person name="Timmerman E."/>
            <person name="Prieto J."/>
            <person name="Arnesen T."/>
            <person name="Sherman F."/>
            <person name="Gevaert K."/>
            <person name="Aldabe R."/>
        </authorList>
    </citation>
    <scope>IDENTIFICATION BY MASS SPECTROMETRY [LARGE SCALE ANALYSIS]</scope>
</reference>
<reference key="15">
    <citation type="journal article" date="2013" name="J. Proteome Res.">
        <title>Toward a comprehensive characterization of a human cancer cell phosphoproteome.</title>
        <authorList>
            <person name="Zhou H."/>
            <person name="Di Palma S."/>
            <person name="Preisinger C."/>
            <person name="Peng M."/>
            <person name="Polat A.N."/>
            <person name="Heck A.J."/>
            <person name="Mohammed S."/>
        </authorList>
    </citation>
    <scope>PHOSPHORYLATION [LARGE SCALE ANALYSIS] AT SER-61</scope>
    <scope>IDENTIFICATION BY MASS SPECTROMETRY [LARGE SCALE ANALYSIS]</scope>
    <source>
        <tissue>Cervix carcinoma</tissue>
        <tissue>Erythroleukemia</tissue>
    </source>
</reference>
<reference key="16">
    <citation type="journal article" date="2014" name="J. Proteomics">
        <title>An enzyme assisted RP-RPLC approach for in-depth analysis of human liver phosphoproteome.</title>
        <authorList>
            <person name="Bian Y."/>
            <person name="Song C."/>
            <person name="Cheng K."/>
            <person name="Dong M."/>
            <person name="Wang F."/>
            <person name="Huang J."/>
            <person name="Sun D."/>
            <person name="Wang L."/>
            <person name="Ye M."/>
            <person name="Zou H."/>
        </authorList>
    </citation>
    <scope>IDENTIFICATION BY MASS SPECTROMETRY [LARGE SCALE ANALYSIS]</scope>
    <source>
        <tissue>Liver</tissue>
    </source>
</reference>
<reference key="17">
    <citation type="journal article" date="2015" name="Proteomics">
        <title>N-terminome analysis of the human mitochondrial proteome.</title>
        <authorList>
            <person name="Vaca Jacome A.S."/>
            <person name="Rabilloud T."/>
            <person name="Schaeffer-Reiss C."/>
            <person name="Rompais M."/>
            <person name="Ayoub D."/>
            <person name="Lane L."/>
            <person name="Bairoch A."/>
            <person name="Van Dorsselaer A."/>
            <person name="Carapito C."/>
        </authorList>
    </citation>
    <scope>IDENTIFICATION BY MASS SPECTROMETRY [LARGE SCALE ANALYSIS]</scope>
</reference>
<reference evidence="14 15" key="18">
    <citation type="journal article" date="2018" name="Int. J. Biol. Macromol.">
        <title>Unique N-terminal extension domain of human asparaginyl-tRNA synthetase elicits CCR3-mediated chemokine activity.</title>
        <authorList>
            <person name="Park J.S."/>
            <person name="Park M.C."/>
            <person name="Lee K.Y."/>
            <person name="Goughnour P.C."/>
            <person name="Jeong S.J."/>
            <person name="Kim H.S."/>
            <person name="Kim H.J."/>
            <person name="Lee B.J."/>
            <person name="Kim S."/>
            <person name="Han B.W."/>
        </authorList>
    </citation>
    <scope>X-RAY CRYSTALLOGRAPHY (1.65 ANGSTROMS) OF 4-77 AND 98-548</scope>
    <scope>SUBUNIT</scope>
    <scope>FUNCTION</scope>
    <scope>SUBCELLULAR LOCATION</scope>
    <scope>LIGAND-BINDING</scope>
    <scope>DOMAIN</scope>
</reference>
<reference key="19">
    <citation type="journal article" date="2020" name="Am. J. Hum. Genet.">
        <title>De novo and bi-allelic pathogenic variants in NARS1 cause neurodevelopmental delay due to toxic gain-of-function and partial loss-of-function effects.</title>
        <authorList>
            <consortium name="SYNAPS Study Group"/>
            <person name="Manole A."/>
            <person name="Efthymiou S."/>
            <person name="O'Connor E."/>
            <person name="Mendes M.I."/>
            <person name="Jennings M."/>
            <person name="Maroofian R."/>
            <person name="Davagnanam I."/>
            <person name="Mankad K."/>
            <person name="Lopez M.R."/>
            <person name="Salpietro V."/>
            <person name="Harripaul R."/>
            <person name="Badalato L."/>
            <person name="Walia J."/>
            <person name="Francklyn C.S."/>
            <person name="Athanasiou-Fragkouli A."/>
            <person name="Sullivan R."/>
            <person name="Desai S."/>
            <person name="Baranano K."/>
            <person name="Zafar F."/>
            <person name="Rana N."/>
            <person name="Ilyas M."/>
            <person name="Horga A."/>
            <person name="Kara M."/>
            <person name="Mattioli F."/>
            <person name="Goldenberg A."/>
            <person name="Griffin H."/>
            <person name="Piton A."/>
            <person name="Henderson L.B."/>
            <person name="Kara B."/>
            <person name="Aslanger A.D."/>
            <person name="Raaphorst J."/>
            <person name="Pfundt R."/>
            <person name="Portier R."/>
            <person name="Shinawi M."/>
            <person name="Kirby A."/>
            <person name="Christensen K.M."/>
            <person name="Wang L."/>
            <person name="Rosti R.O."/>
            <person name="Paracha S.A."/>
            <person name="Sarwar M.T."/>
            <person name="Jenkins D."/>
            <person name="Ahmed J."/>
            <person name="Santoni F.A."/>
            <person name="Ranza E."/>
            <person name="Iwaszkiewicz J."/>
            <person name="Cytrynbaum C."/>
            <person name="Weksberg R."/>
            <person name="Wentzensen I.M."/>
            <person name="Guillen Sacoto M.J."/>
            <person name="Si Y."/>
            <person name="Telegrafi A."/>
            <person name="Andrews M.V."/>
            <person name="Baldridge D."/>
            <person name="Gabriel H."/>
            <person name="Mohr J."/>
            <person name="Oehl-Jaschkowitz B."/>
            <person name="Debard S."/>
            <person name="Senger B."/>
            <person name="Fischer F."/>
            <person name="van Ravenwaaij C."/>
            <person name="Fock A.J.M."/>
            <person name="Stevens S.J.C."/>
            <person name="Baehler J."/>
            <person name="Nasar A."/>
            <person name="Mantovani J.F."/>
            <person name="Manzur A."/>
            <person name="Sarkozy A."/>
            <person name="Smith D.E.C."/>
            <person name="Salomons G.S."/>
            <person name="Ahmed Z.M."/>
            <person name="Riazuddin S."/>
            <person name="Riazuddin S."/>
            <person name="Usmani M.A."/>
            <person name="Seibt A."/>
            <person name="Ansar M."/>
            <person name="Antonarakis S.E."/>
            <person name="Vincent J.B."/>
            <person name="Ayub M."/>
            <person name="Grimmel M."/>
            <person name="Jelsig A.M."/>
            <person name="Hjortshoej T.D."/>
            <person name="Karstensen H.G."/>
            <person name="Hummel M."/>
            <person name="Haack T.B."/>
            <person name="Jamshidi Y."/>
            <person name="Distelmaier F."/>
            <person name="Horvath R."/>
            <person name="Gleeson J.G."/>
            <person name="Becker H."/>
            <person name="Mandel J.L."/>
            <person name="Koolen D.A."/>
            <person name="Houlden H."/>
        </authorList>
    </citation>
    <scope>VARIANTS NEDMILG PRO-11; MET-17; GLU-60; 90-ARG--PRO-548 DEL; CYS-132; PRO-350; ALA-356; THR-422; ILE-459 AND CYS-545</scope>
    <scope>VARIANTS NEDMILEG LEU-322; SER-509 AND 534-ARG--PRO-548 DEL</scope>
    <scope>INVOLVEMENT IN NEDMILG</scope>
    <scope>INVOLVEMENT IN NEDMILEG</scope>
    <scope>CHARACTERIZATION OF VARIANT NEDMILG PRO-11</scope>
    <scope>CHARACTERIZATION OF VARIANTS NEDMILEG LEU-322 AND 534-ARG--PRO-548 DEL</scope>
    <scope>FUNCTION</scope>
    <scope>CATALYTIC ACTIVITY</scope>
</reference>
<reference key="20">
    <citation type="journal article" date="2020" name="Nat. Commun.">
        <title>Loss of NARS1 impairs progenitor proliferation in cortical brain organoids and leads to microcephaly.</title>
        <authorList>
            <person name="Wang L."/>
            <person name="Li Z."/>
            <person name="Sievert D."/>
            <person name="Smith D.E.C."/>
            <person name="Mendes M.I."/>
            <person name="Chen D.Y."/>
            <person name="Stanley V."/>
            <person name="Ghosh S."/>
            <person name="Wang Y."/>
            <person name="Kara M."/>
            <person name="Aslanger A.D."/>
            <person name="Rosti R.O."/>
            <person name="Houlden H."/>
            <person name="Salomons G.S."/>
            <person name="Gleeson J.G."/>
        </authorList>
    </citation>
    <scope>INVOLVEMENT IN NEDMILG</scope>
    <scope>VARIANTS NEDMILG MET-17; ALA-356 AND CYS-545</scope>
    <scope>CHARACTERIZATION OF VARIANT NEDMILG MET-17</scope>
    <scope>FUNCTION</scope>
    <scope>CATALYTIC ACTIVITY</scope>
</reference>
<reference key="21">
    <citation type="journal article" date="2021" name="Nat. Commun.">
        <authorList>
            <person name="Wang L."/>
            <person name="Li Z."/>
            <person name="Sievert D."/>
            <person name="Smith D.E.C."/>
            <person name="Mendes M.I."/>
            <person name="Chen D.Y."/>
            <person name="Stanley V."/>
            <person name="Ghosh S."/>
            <person name="Wang Y."/>
            <person name="Kara M."/>
            <person name="Aslanger A.D."/>
            <person name="Rosti R.O."/>
            <person name="Houlden H."/>
            <person name="Salomons G.S."/>
            <person name="Gleeson J.G."/>
        </authorList>
    </citation>
    <scope>ERRATUM OF PUBMED:32788587</scope>
</reference>
<comment type="function">
    <text evidence="3 4 5 6 7">Catalyzes the attachment of asparagine to tRNA(Asn) in a two-step reaction: asparagine is first activated by ATP to form Asn-AMP and then transferred to the acceptor end of tRNA(Asn) (PubMed:32738225, PubMed:32788587, PubMed:9421509). In addition to its essential role in protein synthesis, acts as a signaling molecule that induced migration of CCR3-expressing cells (PubMed:12235211, PubMed:30171954). Has an essential role in the development of the cerebral cortex, being required for proper proliferation of radial glial cells (PubMed:32788587).</text>
</comment>
<comment type="catalytic activity">
    <reaction evidence="5 6 7">
        <text>tRNA(Asn) + L-asparagine + ATP = L-asparaginyl-tRNA(Asn) + AMP + diphosphate + H(+)</text>
        <dbReference type="Rhea" id="RHEA:11180"/>
        <dbReference type="Rhea" id="RHEA-COMP:9659"/>
        <dbReference type="Rhea" id="RHEA-COMP:9674"/>
        <dbReference type="ChEBI" id="CHEBI:15378"/>
        <dbReference type="ChEBI" id="CHEBI:30616"/>
        <dbReference type="ChEBI" id="CHEBI:33019"/>
        <dbReference type="ChEBI" id="CHEBI:58048"/>
        <dbReference type="ChEBI" id="CHEBI:78442"/>
        <dbReference type="ChEBI" id="CHEBI:78515"/>
        <dbReference type="ChEBI" id="CHEBI:456215"/>
        <dbReference type="EC" id="6.1.1.22"/>
    </reaction>
</comment>
<comment type="subunit">
    <text evidence="4">Homodimer.</text>
</comment>
<comment type="interaction">
    <interactant intactId="EBI-373505">
        <id>O43776</id>
    </interactant>
    <interactant intactId="EBI-930964">
        <id>P54253</id>
        <label>ATXN1</label>
    </interactant>
    <organismsDiffer>false</organismsDiffer>
    <experiments>4</experiments>
</comment>
<comment type="subcellular location">
    <subcellularLocation>
        <location evidence="12">Cytoplasm</location>
    </subcellularLocation>
</comment>
<comment type="alternative products">
    <event type="alternative splicing"/>
    <isoform>
        <id>O43776-1</id>
        <name>1</name>
        <sequence type="displayed"/>
    </isoform>
    <isoform>
        <id>O43776-2</id>
        <name>2</name>
        <sequence type="described" ref="VSP_056201 VSP_056202"/>
    </isoform>
</comment>
<comment type="domain">
    <text evidence="4">The N-terminal domain (1-77) recruits and activates specific immune cells by interacting with CCR3-expressing cells.</text>
</comment>
<comment type="disease" evidence="5 6">
    <disease id="DI-05962">
        <name>Neurodevelopmental disorder with microcephaly, impaired language, and gait abnormalities</name>
        <acronym>NEDMILG</acronym>
        <description>An autosomal recessive neurodevelopmental disorder characterized by global developmental delay apparent in infancy, moderate to profound intellectual disability, poor or absent speech and language, delayed walking with variable gait abnormalities, and progressive microcephaly. Additional variable features include hypotonia, early-onset seizures, and a peripheral demyelinating or axonal peripheral sensorimotor neuropathy.</description>
        <dbReference type="MIM" id="619091"/>
    </disease>
    <text>The disease is caused by variants affecting the gene represented in this entry.</text>
</comment>
<comment type="disease" evidence="5">
    <disease id="DI-05963">
        <name>Neurodevelopmental disorder with microcephaly, impaired language, epilepsy, and gait abnormalities</name>
        <acronym>NEDMILEG</acronym>
        <description>An autosomal dominant neurodevelopmental disorder characterized by global developmental delay apparent in infancy, delayed walking, ataxia, spasticity, impaired intellectual development with poor or absent speech and language, progressive microcephaly, and early-onset seizures in most patients. Facial dysmorphism and a demyelinating peripheral neuropathy may also be observed.</description>
        <dbReference type="MIM" id="619092"/>
    </disease>
    <text>The disease is caused by variants affecting the gene represented in this entry.</text>
</comment>
<comment type="miscellaneous">
    <text evidence="8">Autoantibodies to NARS1, are often detected in sera from patients with interstitial lung disease (ILD).</text>
</comment>
<comment type="similarity">
    <text evidence="11">Belongs to the class-II aminoacyl-tRNA synthetase family.</text>
</comment>
<gene>
    <name evidence="13" type="primary">NARS1</name>
    <name evidence="13" type="synonym">NARS</name>
    <name evidence="10" type="synonym">NRS</name>
</gene>
<dbReference type="EC" id="6.1.1.22" evidence="5 6 7"/>
<dbReference type="EMBL" id="AJ000334">
    <property type="protein sequence ID" value="CAA04008.1"/>
    <property type="molecule type" value="mRNA"/>
</dbReference>
<dbReference type="EMBL" id="D84273">
    <property type="protein sequence ID" value="BAA34600.1"/>
    <property type="molecule type" value="mRNA"/>
</dbReference>
<dbReference type="EMBL" id="AK294364">
    <property type="protein sequence ID" value="BAG57627.1"/>
    <property type="molecule type" value="mRNA"/>
</dbReference>
<dbReference type="EMBL" id="AC100847">
    <property type="status" value="NOT_ANNOTATED_CDS"/>
    <property type="molecule type" value="Genomic_DNA"/>
</dbReference>
<dbReference type="EMBL" id="AK222835">
    <property type="protein sequence ID" value="BAD96555.1"/>
    <property type="molecule type" value="mRNA"/>
</dbReference>
<dbReference type="EMBL" id="BC001687">
    <property type="protein sequence ID" value="AAH01687.1"/>
    <property type="molecule type" value="mRNA"/>
</dbReference>
<dbReference type="CCDS" id="CCDS32837.1">
    <molecule id="O43776-1"/>
</dbReference>
<dbReference type="RefSeq" id="NP_004530.1">
    <molecule id="O43776-1"/>
    <property type="nucleotide sequence ID" value="NM_004539.4"/>
</dbReference>
<dbReference type="PDB" id="4ZYA">
    <property type="method" value="X-ray"/>
    <property type="resolution" value="1.65 A"/>
    <property type="chains" value="A/B=4-77"/>
</dbReference>
<dbReference type="PDB" id="5XIX">
    <property type="method" value="X-ray"/>
    <property type="resolution" value="2.25 A"/>
    <property type="chains" value="A/B/C/D=98-548"/>
</dbReference>
<dbReference type="PDB" id="8H53">
    <property type="method" value="X-ray"/>
    <property type="resolution" value="2.16 A"/>
    <property type="chains" value="A/B/C/D=98-548"/>
</dbReference>
<dbReference type="PDB" id="8TC7">
    <property type="method" value="X-ray"/>
    <property type="resolution" value="1.90 A"/>
    <property type="chains" value="A/B/C/D=98-548"/>
</dbReference>
<dbReference type="PDB" id="8TC8">
    <property type="method" value="X-ray"/>
    <property type="resolution" value="1.90 A"/>
    <property type="chains" value="A/B/C/D=1-548"/>
</dbReference>
<dbReference type="PDB" id="8TC9">
    <property type="method" value="X-ray"/>
    <property type="resolution" value="2.00 A"/>
    <property type="chains" value="A/B/C/D=1-548"/>
</dbReference>
<dbReference type="PDBsum" id="4ZYA"/>
<dbReference type="PDBsum" id="5XIX"/>
<dbReference type="PDBsum" id="8H53"/>
<dbReference type="PDBsum" id="8TC7"/>
<dbReference type="PDBsum" id="8TC8"/>
<dbReference type="PDBsum" id="8TC9"/>
<dbReference type="SMR" id="O43776"/>
<dbReference type="BioGRID" id="110758">
    <property type="interactions" value="160"/>
</dbReference>
<dbReference type="FunCoup" id="O43776">
    <property type="interactions" value="2598"/>
</dbReference>
<dbReference type="IntAct" id="O43776">
    <property type="interactions" value="52"/>
</dbReference>
<dbReference type="MINT" id="O43776"/>
<dbReference type="STRING" id="9606.ENSP00000256854"/>
<dbReference type="DrugBank" id="DB00174">
    <property type="generic name" value="Asparagine"/>
</dbReference>
<dbReference type="GlyGen" id="O43776">
    <property type="glycosylation" value="3 sites, 1 O-linked glycan (1 site)"/>
</dbReference>
<dbReference type="iPTMnet" id="O43776"/>
<dbReference type="MetOSite" id="O43776"/>
<dbReference type="PhosphoSitePlus" id="O43776"/>
<dbReference type="SwissPalm" id="O43776"/>
<dbReference type="BioMuta" id="NARS"/>
<dbReference type="jPOST" id="O43776"/>
<dbReference type="MassIVE" id="O43776"/>
<dbReference type="PaxDb" id="9606-ENSP00000256854"/>
<dbReference type="PeptideAtlas" id="O43776"/>
<dbReference type="ProteomicsDB" id="4098"/>
<dbReference type="ProteomicsDB" id="49167">
    <molecule id="O43776-1"/>
</dbReference>
<dbReference type="Pumba" id="O43776"/>
<dbReference type="ABCD" id="O43776">
    <property type="antibodies" value="3 sequenced antibodies"/>
</dbReference>
<dbReference type="Antibodypedia" id="9706">
    <property type="antibodies" value="200 antibodies from 29 providers"/>
</dbReference>
<dbReference type="DNASU" id="4677"/>
<dbReference type="Ensembl" id="ENST00000256854.10">
    <molecule id="O43776-1"/>
    <property type="protein sequence ID" value="ENSP00000256854.4"/>
    <property type="gene ID" value="ENSG00000134440.12"/>
</dbReference>
<dbReference type="Ensembl" id="ENST00000540592.5">
    <molecule id="O43776-2"/>
    <property type="protein sequence ID" value="ENSP00000442496.1"/>
    <property type="gene ID" value="ENSG00000134440.12"/>
</dbReference>
<dbReference type="GeneID" id="4677"/>
<dbReference type="KEGG" id="hsa:4677"/>
<dbReference type="MANE-Select" id="ENST00000256854.10">
    <property type="protein sequence ID" value="ENSP00000256854.4"/>
    <property type="RefSeq nucleotide sequence ID" value="NM_004539.4"/>
    <property type="RefSeq protein sequence ID" value="NP_004530.1"/>
</dbReference>
<dbReference type="UCSC" id="uc002lgs.4">
    <molecule id="O43776-1"/>
    <property type="organism name" value="human"/>
</dbReference>
<dbReference type="AGR" id="HGNC:7643"/>
<dbReference type="CTD" id="4677"/>
<dbReference type="DisGeNET" id="4677"/>
<dbReference type="GeneCards" id="NARS1"/>
<dbReference type="HGNC" id="HGNC:7643">
    <property type="gene designation" value="NARS1"/>
</dbReference>
<dbReference type="HPA" id="ENSG00000134440">
    <property type="expression patterns" value="Low tissue specificity"/>
</dbReference>
<dbReference type="MalaCards" id="NARS1"/>
<dbReference type="MIM" id="108410">
    <property type="type" value="gene"/>
</dbReference>
<dbReference type="MIM" id="619091">
    <property type="type" value="phenotype"/>
</dbReference>
<dbReference type="MIM" id="619092">
    <property type="type" value="phenotype"/>
</dbReference>
<dbReference type="neXtProt" id="NX_O43776"/>
<dbReference type="OpenTargets" id="ENSG00000134440"/>
<dbReference type="PharmGKB" id="PA31447"/>
<dbReference type="VEuPathDB" id="HostDB:ENSG00000134440"/>
<dbReference type="eggNOG" id="KOG0555">
    <property type="taxonomic scope" value="Eukaryota"/>
</dbReference>
<dbReference type="GeneTree" id="ENSGT01030000234618"/>
<dbReference type="HOGENOM" id="CLU_004553_2_10_1"/>
<dbReference type="InParanoid" id="O43776"/>
<dbReference type="OMA" id="DCCLYPR"/>
<dbReference type="OrthoDB" id="1931232at2759"/>
<dbReference type="PAN-GO" id="O43776">
    <property type="GO annotations" value="3 GO annotations based on evolutionary models"/>
</dbReference>
<dbReference type="PhylomeDB" id="O43776"/>
<dbReference type="TreeFam" id="TF105664"/>
<dbReference type="BRENDA" id="6.1.1.22">
    <property type="organism ID" value="2681"/>
</dbReference>
<dbReference type="PathwayCommons" id="O43776"/>
<dbReference type="Reactome" id="R-HSA-379716">
    <property type="pathway name" value="Cytosolic tRNA aminoacylation"/>
</dbReference>
<dbReference type="SignaLink" id="O43776"/>
<dbReference type="SIGNOR" id="O43776"/>
<dbReference type="BioGRID-ORCS" id="4677">
    <property type="hits" value="841 hits in 1129 CRISPR screens"/>
</dbReference>
<dbReference type="ChiTaRS" id="NARS">
    <property type="organism name" value="human"/>
</dbReference>
<dbReference type="GeneWiki" id="NARS_(gene)"/>
<dbReference type="GenomeRNAi" id="4677"/>
<dbReference type="Pharos" id="O43776">
    <property type="development level" value="Tbio"/>
</dbReference>
<dbReference type="PRO" id="PR:O43776"/>
<dbReference type="Proteomes" id="UP000005640">
    <property type="component" value="Chromosome 18"/>
</dbReference>
<dbReference type="RNAct" id="O43776">
    <property type="molecule type" value="protein"/>
</dbReference>
<dbReference type="Bgee" id="ENSG00000134440">
    <property type="expression patterns" value="Expressed in endothelial cell and 209 other cell types or tissues"/>
</dbReference>
<dbReference type="ExpressionAtlas" id="O43776">
    <property type="expression patterns" value="baseline and differential"/>
</dbReference>
<dbReference type="GO" id="GO:0005737">
    <property type="term" value="C:cytoplasm"/>
    <property type="evidence" value="ECO:0000318"/>
    <property type="project" value="GO_Central"/>
</dbReference>
<dbReference type="GO" id="GO:0005829">
    <property type="term" value="C:cytosol"/>
    <property type="evidence" value="ECO:0000314"/>
    <property type="project" value="HPA"/>
</dbReference>
<dbReference type="GO" id="GO:0070062">
    <property type="term" value="C:extracellular exosome"/>
    <property type="evidence" value="ECO:0007005"/>
    <property type="project" value="UniProtKB"/>
</dbReference>
<dbReference type="GO" id="GO:0004816">
    <property type="term" value="F:asparagine-tRNA ligase activity"/>
    <property type="evidence" value="ECO:0000315"/>
    <property type="project" value="UniProtKB"/>
</dbReference>
<dbReference type="GO" id="GO:0005524">
    <property type="term" value="F:ATP binding"/>
    <property type="evidence" value="ECO:0007669"/>
    <property type="project" value="UniProtKB-KW"/>
</dbReference>
<dbReference type="GO" id="GO:0031728">
    <property type="term" value="F:CCR3 chemokine receptor binding"/>
    <property type="evidence" value="ECO:0000314"/>
    <property type="project" value="UniProtKB"/>
</dbReference>
<dbReference type="GO" id="GO:0003676">
    <property type="term" value="F:nucleic acid binding"/>
    <property type="evidence" value="ECO:0007669"/>
    <property type="project" value="InterPro"/>
</dbReference>
<dbReference type="GO" id="GO:0046983">
    <property type="term" value="F:protein dimerization activity"/>
    <property type="evidence" value="ECO:0000314"/>
    <property type="project" value="UniProtKB"/>
</dbReference>
<dbReference type="GO" id="GO:0006421">
    <property type="term" value="P:asparaginyl-tRNA aminoacylation"/>
    <property type="evidence" value="ECO:0000314"/>
    <property type="project" value="UniProtKB"/>
</dbReference>
<dbReference type="GO" id="GO:0016477">
    <property type="term" value="P:cell migration"/>
    <property type="evidence" value="ECO:0000314"/>
    <property type="project" value="UniProtKB"/>
</dbReference>
<dbReference type="GO" id="GO:0021987">
    <property type="term" value="P:cerebral cortex development"/>
    <property type="evidence" value="ECO:0000315"/>
    <property type="project" value="UniProtKB"/>
</dbReference>
<dbReference type="GO" id="GO:0006418">
    <property type="term" value="P:tRNA aminoacylation for protein translation"/>
    <property type="evidence" value="ECO:0000304"/>
    <property type="project" value="Reactome"/>
</dbReference>
<dbReference type="CDD" id="cd04323">
    <property type="entry name" value="AsnRS_cyto_like_N"/>
    <property type="match status" value="1"/>
</dbReference>
<dbReference type="CDD" id="cd00776">
    <property type="entry name" value="AsxRS_core"/>
    <property type="match status" value="1"/>
</dbReference>
<dbReference type="FunFam" id="2.40.50.140:FF:000151">
    <property type="entry name" value="Asparagine--tRNA ligase, cytoplasmic"/>
    <property type="match status" value="1"/>
</dbReference>
<dbReference type="FunFam" id="3.30.930.10:FF:000040">
    <property type="entry name" value="Asparagine--tRNA ligase, cytoplasmic"/>
    <property type="match status" value="1"/>
</dbReference>
<dbReference type="FunFam" id="3.30.1910.20:FF:000001">
    <property type="entry name" value="asparagine--tRNA ligase, cytoplasmic"/>
    <property type="match status" value="1"/>
</dbReference>
<dbReference type="Gene3D" id="3.30.1910.20">
    <property type="entry name" value="asparaginyl-tRNA synthetase, N-terminal domain"/>
    <property type="match status" value="1"/>
</dbReference>
<dbReference type="Gene3D" id="3.30.930.10">
    <property type="entry name" value="Bira Bifunctional Protein, Domain 2"/>
    <property type="match status" value="1"/>
</dbReference>
<dbReference type="Gene3D" id="2.40.50.140">
    <property type="entry name" value="Nucleic acid-binding proteins"/>
    <property type="match status" value="1"/>
</dbReference>
<dbReference type="InterPro" id="IPR004364">
    <property type="entry name" value="Aa-tRNA-synt_II"/>
</dbReference>
<dbReference type="InterPro" id="IPR006195">
    <property type="entry name" value="aa-tRNA-synth_II"/>
</dbReference>
<dbReference type="InterPro" id="IPR045864">
    <property type="entry name" value="aa-tRNA-synth_II/BPL/LPL"/>
</dbReference>
<dbReference type="InterPro" id="IPR004522">
    <property type="entry name" value="Asn-tRNA-ligase"/>
</dbReference>
<dbReference type="InterPro" id="IPR048952">
    <property type="entry name" value="AsnRS_N"/>
</dbReference>
<dbReference type="InterPro" id="IPR002312">
    <property type="entry name" value="Asp/Asn-tRNA-synth_IIb"/>
</dbReference>
<dbReference type="InterPro" id="IPR012340">
    <property type="entry name" value="NA-bd_OB-fold"/>
</dbReference>
<dbReference type="InterPro" id="IPR004365">
    <property type="entry name" value="NA-bd_OB_tRNA"/>
</dbReference>
<dbReference type="NCBIfam" id="TIGR00457">
    <property type="entry name" value="asnS"/>
    <property type="match status" value="1"/>
</dbReference>
<dbReference type="PANTHER" id="PTHR22594:SF16">
    <property type="entry name" value="ASPARAGINE--TRNA LIGASE, CYTOPLASMIC"/>
    <property type="match status" value="1"/>
</dbReference>
<dbReference type="PANTHER" id="PTHR22594">
    <property type="entry name" value="ASPARTYL/LYSYL-TRNA SYNTHETASE"/>
    <property type="match status" value="1"/>
</dbReference>
<dbReference type="Pfam" id="PF20917">
    <property type="entry name" value="AsnRS_N"/>
    <property type="match status" value="1"/>
</dbReference>
<dbReference type="Pfam" id="PF00152">
    <property type="entry name" value="tRNA-synt_2"/>
    <property type="match status" value="1"/>
</dbReference>
<dbReference type="Pfam" id="PF01336">
    <property type="entry name" value="tRNA_anti-codon"/>
    <property type="match status" value="1"/>
</dbReference>
<dbReference type="PRINTS" id="PR01042">
    <property type="entry name" value="TRNASYNTHASP"/>
</dbReference>
<dbReference type="SUPFAM" id="SSF55681">
    <property type="entry name" value="Class II aaRS and biotin synthetases"/>
    <property type="match status" value="1"/>
</dbReference>
<dbReference type="SUPFAM" id="SSF50249">
    <property type="entry name" value="Nucleic acid-binding proteins"/>
    <property type="match status" value="1"/>
</dbReference>
<dbReference type="PROSITE" id="PS50862">
    <property type="entry name" value="AA_TRNA_LIGASE_II"/>
    <property type="match status" value="1"/>
</dbReference>